<evidence type="ECO:0000255" key="1">
    <source>
        <dbReference type="HAMAP-Rule" id="MF_00332"/>
    </source>
</evidence>
<evidence type="ECO:0000256" key="2">
    <source>
        <dbReference type="SAM" id="MobiDB-lite"/>
    </source>
</evidence>
<keyword id="KW-0067">ATP-binding</keyword>
<keyword id="KW-0143">Chaperone</keyword>
<keyword id="KW-0547">Nucleotide-binding</keyword>
<keyword id="KW-0597">Phosphoprotein</keyword>
<keyword id="KW-0346">Stress response</keyword>
<reference key="1">
    <citation type="journal article" date="2008" name="PLoS Genet.">
        <title>The genome of Borrelia recurrentis, the agent of deadly louse-borne relapsing fever, is a degraded subset of tick-borne Borrelia duttonii.</title>
        <authorList>
            <person name="Lescot M."/>
            <person name="Audic S."/>
            <person name="Robert C."/>
            <person name="Nguyen T.T."/>
            <person name="Blanc G."/>
            <person name="Cutler S.J."/>
            <person name="Wincker P."/>
            <person name="Couloux A."/>
            <person name="Claverie J.-M."/>
            <person name="Raoult D."/>
            <person name="Drancourt M."/>
        </authorList>
    </citation>
    <scope>NUCLEOTIDE SEQUENCE [LARGE SCALE GENOMIC DNA]</scope>
    <source>
        <strain>A1</strain>
    </source>
</reference>
<proteinExistence type="inferred from homology"/>
<accession>B5RPM1</accession>
<comment type="function">
    <text evidence="1">Acts as a chaperone.</text>
</comment>
<comment type="induction">
    <text evidence="1">By stress conditions e.g. heat shock.</text>
</comment>
<comment type="similarity">
    <text evidence="1">Belongs to the heat shock protein 70 family.</text>
</comment>
<gene>
    <name evidence="1" type="primary">dnaK</name>
    <name type="ordered locus">BRE_523</name>
</gene>
<name>DNAK_BORRA</name>
<dbReference type="EMBL" id="CP000993">
    <property type="protein sequence ID" value="ACH94755.1"/>
    <property type="molecule type" value="Genomic_DNA"/>
</dbReference>
<dbReference type="RefSeq" id="WP_012538955.1">
    <property type="nucleotide sequence ID" value="NC_011244.1"/>
</dbReference>
<dbReference type="SMR" id="B5RPM1"/>
<dbReference type="KEGG" id="bre:BRE_523"/>
<dbReference type="HOGENOM" id="CLU_005965_2_4_12"/>
<dbReference type="Proteomes" id="UP000000612">
    <property type="component" value="Chromosome"/>
</dbReference>
<dbReference type="GO" id="GO:0005524">
    <property type="term" value="F:ATP binding"/>
    <property type="evidence" value="ECO:0007669"/>
    <property type="project" value="UniProtKB-UniRule"/>
</dbReference>
<dbReference type="GO" id="GO:0140662">
    <property type="term" value="F:ATP-dependent protein folding chaperone"/>
    <property type="evidence" value="ECO:0007669"/>
    <property type="project" value="InterPro"/>
</dbReference>
<dbReference type="GO" id="GO:0051082">
    <property type="term" value="F:unfolded protein binding"/>
    <property type="evidence" value="ECO:0007669"/>
    <property type="project" value="InterPro"/>
</dbReference>
<dbReference type="CDD" id="cd10234">
    <property type="entry name" value="ASKHA_NBD_HSP70_DnaK-like"/>
    <property type="match status" value="1"/>
</dbReference>
<dbReference type="FunFam" id="2.60.34.10:FF:000014">
    <property type="entry name" value="Chaperone protein DnaK HSP70"/>
    <property type="match status" value="1"/>
</dbReference>
<dbReference type="FunFam" id="3.30.420.40:FF:000020">
    <property type="entry name" value="Chaperone protein HscA homolog"/>
    <property type="match status" value="1"/>
</dbReference>
<dbReference type="FunFam" id="1.20.1270.10:FF:000001">
    <property type="entry name" value="Molecular chaperone DnaK"/>
    <property type="match status" value="1"/>
</dbReference>
<dbReference type="FunFam" id="3.30.420.40:FF:000004">
    <property type="entry name" value="Molecular chaperone DnaK"/>
    <property type="match status" value="1"/>
</dbReference>
<dbReference type="FunFam" id="3.90.640.10:FF:000003">
    <property type="entry name" value="Molecular chaperone DnaK"/>
    <property type="match status" value="1"/>
</dbReference>
<dbReference type="Gene3D" id="1.20.1270.10">
    <property type="match status" value="1"/>
</dbReference>
<dbReference type="Gene3D" id="3.30.420.40">
    <property type="match status" value="2"/>
</dbReference>
<dbReference type="Gene3D" id="3.90.640.10">
    <property type="entry name" value="Actin, Chain A, domain 4"/>
    <property type="match status" value="1"/>
</dbReference>
<dbReference type="Gene3D" id="2.60.34.10">
    <property type="entry name" value="Substrate Binding Domain Of DNAk, Chain A, domain 1"/>
    <property type="match status" value="1"/>
</dbReference>
<dbReference type="HAMAP" id="MF_00332">
    <property type="entry name" value="DnaK"/>
    <property type="match status" value="1"/>
</dbReference>
<dbReference type="InterPro" id="IPR043129">
    <property type="entry name" value="ATPase_NBD"/>
</dbReference>
<dbReference type="InterPro" id="IPR012725">
    <property type="entry name" value="Chaperone_DnaK"/>
</dbReference>
<dbReference type="InterPro" id="IPR018181">
    <property type="entry name" value="Heat_shock_70_CS"/>
</dbReference>
<dbReference type="InterPro" id="IPR029048">
    <property type="entry name" value="HSP70_C_sf"/>
</dbReference>
<dbReference type="InterPro" id="IPR029047">
    <property type="entry name" value="HSP70_peptide-bd_sf"/>
</dbReference>
<dbReference type="InterPro" id="IPR013126">
    <property type="entry name" value="Hsp_70_fam"/>
</dbReference>
<dbReference type="NCBIfam" id="NF001413">
    <property type="entry name" value="PRK00290.1"/>
    <property type="match status" value="1"/>
</dbReference>
<dbReference type="NCBIfam" id="NF003520">
    <property type="entry name" value="PRK05183.1"/>
    <property type="match status" value="1"/>
</dbReference>
<dbReference type="NCBIfam" id="TIGR02350">
    <property type="entry name" value="prok_dnaK"/>
    <property type="match status" value="1"/>
</dbReference>
<dbReference type="PANTHER" id="PTHR19375">
    <property type="entry name" value="HEAT SHOCK PROTEIN 70KDA"/>
    <property type="match status" value="1"/>
</dbReference>
<dbReference type="Pfam" id="PF00012">
    <property type="entry name" value="HSP70"/>
    <property type="match status" value="1"/>
</dbReference>
<dbReference type="PRINTS" id="PR00301">
    <property type="entry name" value="HEATSHOCK70"/>
</dbReference>
<dbReference type="SUPFAM" id="SSF53067">
    <property type="entry name" value="Actin-like ATPase domain"/>
    <property type="match status" value="2"/>
</dbReference>
<dbReference type="SUPFAM" id="SSF100934">
    <property type="entry name" value="Heat shock protein 70kD (HSP70), C-terminal subdomain"/>
    <property type="match status" value="1"/>
</dbReference>
<dbReference type="SUPFAM" id="SSF100920">
    <property type="entry name" value="Heat shock protein 70kD (HSP70), peptide-binding domain"/>
    <property type="match status" value="1"/>
</dbReference>
<dbReference type="PROSITE" id="PS00297">
    <property type="entry name" value="HSP70_1"/>
    <property type="match status" value="1"/>
</dbReference>
<dbReference type="PROSITE" id="PS00329">
    <property type="entry name" value="HSP70_2"/>
    <property type="match status" value="1"/>
</dbReference>
<dbReference type="PROSITE" id="PS01036">
    <property type="entry name" value="HSP70_3"/>
    <property type="match status" value="1"/>
</dbReference>
<protein>
    <recommendedName>
        <fullName evidence="1">Chaperone protein DnaK</fullName>
    </recommendedName>
    <alternativeName>
        <fullName evidence="1">HSP70</fullName>
    </alternativeName>
    <alternativeName>
        <fullName evidence="1">Heat shock 70 kDa protein</fullName>
    </alternativeName>
    <alternativeName>
        <fullName evidence="1">Heat shock protein 70</fullName>
    </alternativeName>
</protein>
<sequence>MGKIIGIDLGTTNSCVAIMEHGKPVVIQNSEGGRTTPSIVAYTNKGERLVGQVAKNQMVTNPENTIYSIKRFMGRRFEEVASEIKMVPYKVEKGQNGDARVNISNIKKQMSPPEISAATLTKMKETAEAYLGEKVTEAVITVPAYFNDAQRQATKDAGKIAGLDVKRIVNEPTAAALAYGIEKKHEEIVAVYDLGGGTFDISILELGDGVFEVKSTNGDTHLGGDNFDDEIIKYLITEFKKDSAIDLSNDKMALQRLKEAAEKAKIELSGAQEASINLPFITADANGPKHLQYTLTRAKFEQMVDHLVQKTKEPCLKAIKDAGLKASDINEVILVGGSTRIPAIQKIVKEIFGQEPNKGVNPDEAVAIGAAIQGGILTGEAKDMVLLDVTPLSLGIETLGGVMTKLIERNTTIPTKKSQVFSTAADNQTSVDIKVLQGEREMASQNRVLGNFILDGIPAAPRGVPQIEVSFDIDANGIVHVSAKDMGTGKEQKIRIESSSGLSEEEIERMVKDAESHAEEDKKLKEGIEAKNIANSLIYQTEKSLKEYGEKITNQDKEAIENKIKELKDTLEGSDISLLKSKTEELQQASYKIAEMMYKDAQASSPAQNNAQNNAGSESKEADYEVVDEDKK</sequence>
<organism>
    <name type="scientific">Borrelia recurrentis (strain A1)</name>
    <dbReference type="NCBI Taxonomy" id="412418"/>
    <lineage>
        <taxon>Bacteria</taxon>
        <taxon>Pseudomonadati</taxon>
        <taxon>Spirochaetota</taxon>
        <taxon>Spirochaetia</taxon>
        <taxon>Spirochaetales</taxon>
        <taxon>Borreliaceae</taxon>
        <taxon>Borrelia</taxon>
    </lineage>
</organism>
<feature type="chain" id="PRO_1000119676" description="Chaperone protein DnaK">
    <location>
        <begin position="1"/>
        <end position="632"/>
    </location>
</feature>
<feature type="region of interest" description="Disordered" evidence="2">
    <location>
        <begin position="601"/>
        <end position="632"/>
    </location>
</feature>
<feature type="compositionally biased region" description="Low complexity" evidence="2">
    <location>
        <begin position="601"/>
        <end position="617"/>
    </location>
</feature>
<feature type="compositionally biased region" description="Basic and acidic residues" evidence="2">
    <location>
        <begin position="618"/>
        <end position="632"/>
    </location>
</feature>
<feature type="modified residue" description="Phosphothreonine; by autocatalysis" evidence="1">
    <location>
        <position position="198"/>
    </location>
</feature>